<proteinExistence type="inferred from homology"/>
<keyword id="KW-0067">ATP-binding</keyword>
<keyword id="KW-0997">Cell inner membrane</keyword>
<keyword id="KW-1003">Cell membrane</keyword>
<keyword id="KW-0472">Membrane</keyword>
<keyword id="KW-0536">Nodulation</keyword>
<keyword id="KW-0547">Nucleotide-binding</keyword>
<keyword id="KW-1278">Translocase</keyword>
<keyword id="KW-0813">Transport</keyword>
<evidence type="ECO:0000255" key="1">
    <source>
        <dbReference type="HAMAP-Rule" id="MF_01704"/>
    </source>
</evidence>
<sequence length="325" mass="35958">MRGDDRHNGGYCAPPARLPVPALTAILELRKVRKQYGDTVVVNDLDLQVHRGQCFGLLGPNGAGKTTTLRLLLGLTTPAGGSLTLCGEPIPERAPQARMRVGVVPQFDNLDPDFSVIENLRIFGRYFGLSSAVIERRVPALLEFARLENRANAQVRDLSGGMRRRLTVARALINDPDLLIMDEPTTGLDPQARHLIWERLKSLMASGKTILLTTHFMEEAERLCNYLCVIDGGRKIAEGKPHDLIDSQIGCDVVEVYGDELDTLRGSLTPLAERTEMSGETLFCYVREPAPLLAALHGQSGVRYLHRPANLEDVFLKLTGREMRD</sequence>
<feature type="chain" id="PRO_0000272602" description="Nod factor export ATP-binding protein I">
    <location>
        <begin position="1"/>
        <end position="325"/>
    </location>
</feature>
<feature type="domain" description="ABC transporter" evidence="1">
    <location>
        <begin position="27"/>
        <end position="257"/>
    </location>
</feature>
<feature type="binding site" evidence="1">
    <location>
        <begin position="59"/>
        <end position="66"/>
    </location>
    <ligand>
        <name>ATP</name>
        <dbReference type="ChEBI" id="CHEBI:30616"/>
    </ligand>
</feature>
<gene>
    <name evidence="1" type="primary">nodI</name>
    <name type="ordered locus">Reut_A2295</name>
</gene>
<accession>Q46YX6</accession>
<dbReference type="EC" id="7.6.2.-" evidence="1"/>
<dbReference type="EMBL" id="CP000090">
    <property type="protein sequence ID" value="AAZ61657.1"/>
    <property type="molecule type" value="Genomic_DNA"/>
</dbReference>
<dbReference type="SMR" id="Q46YX6"/>
<dbReference type="STRING" id="264198.Reut_A2295"/>
<dbReference type="KEGG" id="reu:Reut_A2295"/>
<dbReference type="eggNOG" id="COG1131">
    <property type="taxonomic scope" value="Bacteria"/>
</dbReference>
<dbReference type="HOGENOM" id="CLU_000604_1_2_4"/>
<dbReference type="GO" id="GO:0005886">
    <property type="term" value="C:plasma membrane"/>
    <property type="evidence" value="ECO:0007669"/>
    <property type="project" value="UniProtKB-SubCell"/>
</dbReference>
<dbReference type="GO" id="GO:0005524">
    <property type="term" value="F:ATP binding"/>
    <property type="evidence" value="ECO:0007669"/>
    <property type="project" value="UniProtKB-KW"/>
</dbReference>
<dbReference type="GO" id="GO:0016887">
    <property type="term" value="F:ATP hydrolysis activity"/>
    <property type="evidence" value="ECO:0007669"/>
    <property type="project" value="InterPro"/>
</dbReference>
<dbReference type="GO" id="GO:0022857">
    <property type="term" value="F:transmembrane transporter activity"/>
    <property type="evidence" value="ECO:0007669"/>
    <property type="project" value="InterPro"/>
</dbReference>
<dbReference type="CDD" id="cd03263">
    <property type="entry name" value="ABC_subfamily_A"/>
    <property type="match status" value="1"/>
</dbReference>
<dbReference type="FunFam" id="3.40.50.300:FF:000589">
    <property type="entry name" value="ABC transporter, ATP-binding subunit"/>
    <property type="match status" value="1"/>
</dbReference>
<dbReference type="Gene3D" id="3.40.50.300">
    <property type="entry name" value="P-loop containing nucleotide triphosphate hydrolases"/>
    <property type="match status" value="1"/>
</dbReference>
<dbReference type="InterPro" id="IPR003593">
    <property type="entry name" value="AAA+_ATPase"/>
</dbReference>
<dbReference type="InterPro" id="IPR003439">
    <property type="entry name" value="ABC_transporter-like_ATP-bd"/>
</dbReference>
<dbReference type="InterPro" id="IPR017871">
    <property type="entry name" value="ABC_transporter-like_CS"/>
</dbReference>
<dbReference type="InterPro" id="IPR050763">
    <property type="entry name" value="ABC_transporter_ATP-binding"/>
</dbReference>
<dbReference type="InterPro" id="IPR005978">
    <property type="entry name" value="ABC_transptNodI"/>
</dbReference>
<dbReference type="InterPro" id="IPR027417">
    <property type="entry name" value="P-loop_NTPase"/>
</dbReference>
<dbReference type="NCBIfam" id="TIGR01288">
    <property type="entry name" value="nodI"/>
    <property type="match status" value="1"/>
</dbReference>
<dbReference type="NCBIfam" id="NF010060">
    <property type="entry name" value="PRK13537.1"/>
    <property type="match status" value="1"/>
</dbReference>
<dbReference type="PANTHER" id="PTHR42711">
    <property type="entry name" value="ABC TRANSPORTER ATP-BINDING PROTEIN"/>
    <property type="match status" value="1"/>
</dbReference>
<dbReference type="PANTHER" id="PTHR42711:SF5">
    <property type="entry name" value="ABC TRANSPORTER ATP-BINDING PROTEIN NATA"/>
    <property type="match status" value="1"/>
</dbReference>
<dbReference type="Pfam" id="PF00005">
    <property type="entry name" value="ABC_tran"/>
    <property type="match status" value="1"/>
</dbReference>
<dbReference type="SMART" id="SM00382">
    <property type="entry name" value="AAA"/>
    <property type="match status" value="1"/>
</dbReference>
<dbReference type="SUPFAM" id="SSF52540">
    <property type="entry name" value="P-loop containing nucleoside triphosphate hydrolases"/>
    <property type="match status" value="1"/>
</dbReference>
<dbReference type="PROSITE" id="PS00211">
    <property type="entry name" value="ABC_TRANSPORTER_1"/>
    <property type="match status" value="1"/>
</dbReference>
<dbReference type="PROSITE" id="PS50893">
    <property type="entry name" value="ABC_TRANSPORTER_2"/>
    <property type="match status" value="1"/>
</dbReference>
<dbReference type="PROSITE" id="PS51240">
    <property type="entry name" value="NODI"/>
    <property type="match status" value="1"/>
</dbReference>
<organism>
    <name type="scientific">Cupriavidus pinatubonensis (strain JMP 134 / LMG 1197)</name>
    <name type="common">Cupriavidus necator (strain JMP 134)</name>
    <dbReference type="NCBI Taxonomy" id="264198"/>
    <lineage>
        <taxon>Bacteria</taxon>
        <taxon>Pseudomonadati</taxon>
        <taxon>Pseudomonadota</taxon>
        <taxon>Betaproteobacteria</taxon>
        <taxon>Burkholderiales</taxon>
        <taxon>Burkholderiaceae</taxon>
        <taxon>Cupriavidus</taxon>
    </lineage>
</organism>
<reference key="1">
    <citation type="journal article" date="2010" name="PLoS ONE">
        <title>The complete multipartite genome sequence of Cupriavidus necator JMP134, a versatile pollutant degrader.</title>
        <authorList>
            <person name="Lykidis A."/>
            <person name="Perez-Pantoja D."/>
            <person name="Ledger T."/>
            <person name="Mavromatis K."/>
            <person name="Anderson I.J."/>
            <person name="Ivanova N.N."/>
            <person name="Hooper S.D."/>
            <person name="Lapidus A."/>
            <person name="Lucas S."/>
            <person name="Gonzalez B."/>
            <person name="Kyrpides N.C."/>
        </authorList>
    </citation>
    <scope>NUCLEOTIDE SEQUENCE [LARGE SCALE GENOMIC DNA]</scope>
    <source>
        <strain>JMP134 / LMG 1197</strain>
    </source>
</reference>
<protein>
    <recommendedName>
        <fullName evidence="1">Nod factor export ATP-binding protein I</fullName>
        <ecNumber evidence="1">7.6.2.-</ecNumber>
    </recommendedName>
    <alternativeName>
        <fullName evidence="1">Nodulation ATP-binding protein I</fullName>
    </alternativeName>
</protein>
<name>NODI_CUPPJ</name>
<comment type="function">
    <text evidence="1">Part of the ABC transporter complex NodIJ involved in the export of the nodulation factors (Nod factors), the bacterial signal molecules that induce symbiosis and subsequent nodulation induction. Nod factors are LCO (lipo-chitin oligosaccharide), a modified beta-1,4-linked N-acetylglucosamine oligosaccharide. This subunit is responsible for energy coupling to the transport system.</text>
</comment>
<comment type="subunit">
    <text evidence="1">The complex is composed of two ATP-binding proteins (NodI) and two transmembrane proteins (NodJ).</text>
</comment>
<comment type="subcellular location">
    <subcellularLocation>
        <location evidence="1">Cell inner membrane</location>
        <topology evidence="1">Peripheral membrane protein</topology>
    </subcellularLocation>
</comment>
<comment type="similarity">
    <text evidence="1">Belongs to the ABC transporter superfamily. Lipooligosaccharide exporter (TC 3.A.1.102) family.</text>
</comment>